<reference key="1">
    <citation type="journal article" date="2005" name="Nucleic Acids Res.">
        <title>Genome dynamics and diversity of Shigella species, the etiologic agents of bacillary dysentery.</title>
        <authorList>
            <person name="Yang F."/>
            <person name="Yang J."/>
            <person name="Zhang X."/>
            <person name="Chen L."/>
            <person name="Jiang Y."/>
            <person name="Yan Y."/>
            <person name="Tang X."/>
            <person name="Wang J."/>
            <person name="Xiong Z."/>
            <person name="Dong J."/>
            <person name="Xue Y."/>
            <person name="Zhu Y."/>
            <person name="Xu X."/>
            <person name="Sun L."/>
            <person name="Chen S."/>
            <person name="Nie H."/>
            <person name="Peng J."/>
            <person name="Xu J."/>
            <person name="Wang Y."/>
            <person name="Yuan Z."/>
            <person name="Wen Y."/>
            <person name="Yao Z."/>
            <person name="Shen Y."/>
            <person name="Qiang B."/>
            <person name="Hou Y."/>
            <person name="Yu J."/>
            <person name="Jin Q."/>
        </authorList>
    </citation>
    <scope>NUCLEOTIDE SEQUENCE [LARGE SCALE GENOMIC DNA]</scope>
    <source>
        <strain>Ss046</strain>
    </source>
</reference>
<dbReference type="EMBL" id="CP000038">
    <property type="protein sequence ID" value="AAZ88249.1"/>
    <property type="molecule type" value="Genomic_DNA"/>
</dbReference>
<dbReference type="RefSeq" id="WP_001295399.1">
    <property type="nucleotide sequence ID" value="NC_007384.1"/>
</dbReference>
<dbReference type="SMR" id="Q3Z1W3"/>
<dbReference type="GeneID" id="93775758"/>
<dbReference type="KEGG" id="ssn:SSON_1550"/>
<dbReference type="HOGENOM" id="CLU_078181_0_0_6"/>
<dbReference type="Proteomes" id="UP000002529">
    <property type="component" value="Chromosome"/>
</dbReference>
<dbReference type="GO" id="GO:0005737">
    <property type="term" value="C:cytoplasm"/>
    <property type="evidence" value="ECO:0007669"/>
    <property type="project" value="UniProtKB-SubCell"/>
</dbReference>
<dbReference type="GO" id="GO:0003677">
    <property type="term" value="F:DNA binding"/>
    <property type="evidence" value="ECO:0007669"/>
    <property type="project" value="UniProtKB-UniRule"/>
</dbReference>
<dbReference type="GO" id="GO:0006274">
    <property type="term" value="P:DNA replication termination"/>
    <property type="evidence" value="ECO:0007669"/>
    <property type="project" value="UniProtKB-UniRule"/>
</dbReference>
<dbReference type="Gene3D" id="3.30.54.10">
    <property type="match status" value="1"/>
</dbReference>
<dbReference type="Gene3D" id="3.50.14.10">
    <property type="entry name" value="Replication terminator Tus, domain 1 superfamily/Replication terminator Tus"/>
    <property type="match status" value="1"/>
</dbReference>
<dbReference type="HAMAP" id="MF_00483">
    <property type="entry name" value="Rep_term_Tus"/>
    <property type="match status" value="1"/>
</dbReference>
<dbReference type="InterPro" id="IPR008865">
    <property type="entry name" value="DNA_replication_term_site-bd"/>
</dbReference>
<dbReference type="InterPro" id="IPR036381">
    <property type="entry name" value="Tus_dom1"/>
</dbReference>
<dbReference type="InterPro" id="IPR036384">
    <property type="entry name" value="Tus_sf"/>
</dbReference>
<dbReference type="NCBIfam" id="TIGR02648">
    <property type="entry name" value="rep_term_tus"/>
    <property type="match status" value="1"/>
</dbReference>
<dbReference type="Pfam" id="PF05472">
    <property type="entry name" value="Ter"/>
    <property type="match status" value="1"/>
</dbReference>
<dbReference type="SUPFAM" id="SSF56596">
    <property type="entry name" value="Replication terminator protein (Tus)"/>
    <property type="match status" value="1"/>
</dbReference>
<organism>
    <name type="scientific">Shigella sonnei (strain Ss046)</name>
    <dbReference type="NCBI Taxonomy" id="300269"/>
    <lineage>
        <taxon>Bacteria</taxon>
        <taxon>Pseudomonadati</taxon>
        <taxon>Pseudomonadota</taxon>
        <taxon>Gammaproteobacteria</taxon>
        <taxon>Enterobacterales</taxon>
        <taxon>Enterobacteriaceae</taxon>
        <taxon>Shigella</taxon>
    </lineage>
</organism>
<sequence length="309" mass="35741">MARYDLVDRLNTTFRQMEQELAAFAAHLEQHKLLVARVFSLPEVKKEDEHNPLNRIEVKQHLGNDAQSLALRHFRHLFIQQQSENRSSKAAVRLPGVLCYQVDNLSQAALVSHIQHINKLKTTFEHIVTVESELPTAARFEWVHRHLPGLITLNAYRTLTVLHDPATLRFGWANKHIIKNLHRDEVLAQLEKSLKSPRSVAPWTREEWQRKLEREYQDIAALPQNAKLKIKRPVKVQPIARVWYKGDQKQVQHACPTPLIALINRDNGAGVPDVGELLNYDADNVQHRYKPQAQPLRLIIPRLHLYVAD</sequence>
<protein>
    <recommendedName>
        <fullName evidence="1">DNA replication terminus site-binding protein</fullName>
        <shortName evidence="1">Ter-binding protein</shortName>
    </recommendedName>
</protein>
<feature type="chain" id="PRO_0000049423" description="DNA replication terminus site-binding protein">
    <location>
        <begin position="1"/>
        <end position="309"/>
    </location>
</feature>
<proteinExistence type="inferred from homology"/>
<keyword id="KW-0963">Cytoplasm</keyword>
<keyword id="KW-0235">DNA replication</keyword>
<keyword id="KW-0238">DNA-binding</keyword>
<keyword id="KW-1185">Reference proteome</keyword>
<comment type="function">
    <text evidence="1">Trans-acting protein required for termination of DNA replication. Binds to DNA replication terminator sequences (terA to terF) to prevent the passage of replication forks. The termination efficiency will be affected by the affinity of this protein for the terminator sequence.</text>
</comment>
<comment type="subcellular location">
    <subcellularLocation>
        <location evidence="1">Cytoplasm</location>
    </subcellularLocation>
</comment>
<comment type="similarity">
    <text evidence="1">Belongs to the Tus family.</text>
</comment>
<gene>
    <name evidence="1" type="primary">tus</name>
    <name type="ordered locus">SSON_1550</name>
</gene>
<evidence type="ECO:0000255" key="1">
    <source>
        <dbReference type="HAMAP-Rule" id="MF_00483"/>
    </source>
</evidence>
<name>TUS_SHISS</name>
<accession>Q3Z1W3</accession>